<protein>
    <recommendedName>
        <fullName>Extracellular metalloproteinase</fullName>
        <ecNumber>3.4.24.-</ecNumber>
    </recommendedName>
    <alternativeName>
        <fullName>Elastinolytic metalloproteinase MEP</fullName>
    </alternativeName>
    <alternativeName>
        <fullName>Fungalysin MEP</fullName>
    </alternativeName>
</protein>
<organism>
    <name type="scientific">Pyrenophora tritici-repentis (strain Pt-1C-BFP)</name>
    <name type="common">Wheat tan spot fungus</name>
    <name type="synonym">Drechslera tritici-repentis</name>
    <dbReference type="NCBI Taxonomy" id="426418"/>
    <lineage>
        <taxon>Eukaryota</taxon>
        <taxon>Fungi</taxon>
        <taxon>Dikarya</taxon>
        <taxon>Ascomycota</taxon>
        <taxon>Pezizomycotina</taxon>
        <taxon>Dothideomycetes</taxon>
        <taxon>Pleosporomycetidae</taxon>
        <taxon>Pleosporales</taxon>
        <taxon>Pleosporineae</taxon>
        <taxon>Pleosporaceae</taxon>
        <taxon>Pyrenophora</taxon>
    </lineage>
</organism>
<evidence type="ECO:0000250" key="1"/>
<evidence type="ECO:0000255" key="2"/>
<evidence type="ECO:0000255" key="3">
    <source>
        <dbReference type="PROSITE-ProRule" id="PRU10095"/>
    </source>
</evidence>
<evidence type="ECO:0000305" key="4"/>
<name>MEP_PYRTR</name>
<sequence length="653" mass="71711">MRSFLLASLASLSVISVYGHPHARSTLTRRGVDLDSYRMKHAATYKNVAEVVADHNINTLAKRASAQDIATDLVKATIPNATFRLVSDSYVSDNGVAHFYFKQTANGLDIDTADFNVNIGRDGNVFSFGNSFYKGDVPAPPSLTKRDGSEPVAALKSAVDVLALPVSAQSATAEPKDATETYAIKKTTGTVSEPEARLVYLVDDEGKLALTWRVETDIMSNWLLSYVDVKDGSKVHAVVDYSADATYNVYPWGINDPTEGERQLVTDGFYPPASEFGWHNDGKMAFKTTRGNNGIAHTNWDNKMSGFLDLPRPTSEDLNFDYPFSLNQTDFHDYGNASITQLFYTSNKYHDLLYTLGFNEKAGNFEINNNGAGGVGQDFVYLNAQDGERFNNANFATPPDGSPARMRMYIWNQTTPFRDCSFEAGVVIHEYTHGLSNRLTGGPANSGCLSMLESGGMGEGWSDFFATAIRLKPSDTRAKDYTMGEWISGSEFGIRNYKYSTNLEVNPQVYTDVDQYTRVHPIGNIWASMLYEVLWNLIDKYGKNDDWLPEFNSAGVPKDGKYLAMKLALDGMALQPCNPTFVSARDAIIDADKALTGGANLCEIWSGFAKRGLGEKAVYSTGGRTNSFDVPAGVCNNSTVSSQARRVKLPLSV</sequence>
<keyword id="KW-0325">Glycoprotein</keyword>
<keyword id="KW-0378">Hydrolase</keyword>
<keyword id="KW-0479">Metal-binding</keyword>
<keyword id="KW-0482">Metalloprotease</keyword>
<keyword id="KW-0645">Protease</keyword>
<keyword id="KW-1185">Reference proteome</keyword>
<keyword id="KW-0964">Secreted</keyword>
<keyword id="KW-0732">Signal</keyword>
<keyword id="KW-0862">Zinc</keyword>
<keyword id="KW-0865">Zymogen</keyword>
<dbReference type="EC" id="3.4.24.-"/>
<dbReference type="EMBL" id="DS231628">
    <property type="protein sequence ID" value="EDU43689.1"/>
    <property type="molecule type" value="Genomic_DNA"/>
</dbReference>
<dbReference type="RefSeq" id="XP_001940970.1">
    <property type="nucleotide sequence ID" value="XM_001940935.1"/>
</dbReference>
<dbReference type="SMR" id="B2WKX9"/>
<dbReference type="STRING" id="426418.B2WKX9"/>
<dbReference type="MEROPS" id="M36.001"/>
<dbReference type="GlyCosmos" id="B2WKX9">
    <property type="glycosylation" value="5 sites, No reported glycans"/>
</dbReference>
<dbReference type="EnsemblFungi" id="EDU43689">
    <property type="protein sequence ID" value="EDU43689"/>
    <property type="gene ID" value="PTRG_10639"/>
</dbReference>
<dbReference type="GeneID" id="6348947"/>
<dbReference type="KEGG" id="ptrr:6348947"/>
<dbReference type="eggNOG" id="ENOG502QTDC">
    <property type="taxonomic scope" value="Eukaryota"/>
</dbReference>
<dbReference type="HOGENOM" id="CLU_012703_3_0_1"/>
<dbReference type="InParanoid" id="B2WKX9"/>
<dbReference type="OMA" id="CLVWRVE"/>
<dbReference type="OrthoDB" id="8218at28556"/>
<dbReference type="Proteomes" id="UP000001471">
    <property type="component" value="Unassembled WGS sequence"/>
</dbReference>
<dbReference type="GO" id="GO:0005576">
    <property type="term" value="C:extracellular region"/>
    <property type="evidence" value="ECO:0007669"/>
    <property type="project" value="UniProtKB-SubCell"/>
</dbReference>
<dbReference type="GO" id="GO:0004222">
    <property type="term" value="F:metalloendopeptidase activity"/>
    <property type="evidence" value="ECO:0007669"/>
    <property type="project" value="InterPro"/>
</dbReference>
<dbReference type="GO" id="GO:0008270">
    <property type="term" value="F:zinc ion binding"/>
    <property type="evidence" value="ECO:0007669"/>
    <property type="project" value="InterPro"/>
</dbReference>
<dbReference type="GO" id="GO:0006508">
    <property type="term" value="P:proteolysis"/>
    <property type="evidence" value="ECO:0007669"/>
    <property type="project" value="UniProtKB-KW"/>
</dbReference>
<dbReference type="CDD" id="cd09596">
    <property type="entry name" value="M36"/>
    <property type="match status" value="1"/>
</dbReference>
<dbReference type="Gene3D" id="3.10.170.10">
    <property type="match status" value="1"/>
</dbReference>
<dbReference type="Gene3D" id="1.10.390.10">
    <property type="entry name" value="Neutral Protease Domain 2"/>
    <property type="match status" value="1"/>
</dbReference>
<dbReference type="InterPro" id="IPR011096">
    <property type="entry name" value="FTP_domain"/>
</dbReference>
<dbReference type="InterPro" id="IPR050371">
    <property type="entry name" value="Fungal_virulence_M36"/>
</dbReference>
<dbReference type="InterPro" id="IPR001842">
    <property type="entry name" value="Peptidase_M36"/>
</dbReference>
<dbReference type="InterPro" id="IPR027268">
    <property type="entry name" value="Peptidase_M4/M1_CTD_sf"/>
</dbReference>
<dbReference type="PANTHER" id="PTHR33478">
    <property type="entry name" value="EXTRACELLULAR METALLOPROTEINASE MEP"/>
    <property type="match status" value="1"/>
</dbReference>
<dbReference type="PANTHER" id="PTHR33478:SF1">
    <property type="entry name" value="EXTRACELLULAR METALLOPROTEINASE MEP"/>
    <property type="match status" value="1"/>
</dbReference>
<dbReference type="Pfam" id="PF07504">
    <property type="entry name" value="FTP"/>
    <property type="match status" value="1"/>
</dbReference>
<dbReference type="Pfam" id="PF02128">
    <property type="entry name" value="Peptidase_M36"/>
    <property type="match status" value="1"/>
</dbReference>
<dbReference type="PRINTS" id="PR00999">
    <property type="entry name" value="FUNGALYSIN"/>
</dbReference>
<dbReference type="SUPFAM" id="SSF55486">
    <property type="entry name" value="Metalloproteases ('zincins'), catalytic domain"/>
    <property type="match status" value="1"/>
</dbReference>
<dbReference type="PROSITE" id="PS00142">
    <property type="entry name" value="ZINC_PROTEASE"/>
    <property type="match status" value="1"/>
</dbReference>
<feature type="signal peptide" evidence="2">
    <location>
        <begin position="1"/>
        <end position="19"/>
    </location>
</feature>
<feature type="propeptide" id="PRO_0000407191" evidence="1">
    <location>
        <begin position="20"/>
        <end position="244"/>
    </location>
</feature>
<feature type="chain" id="PRO_0000407192" description="Extracellular metalloproteinase">
    <location>
        <begin position="245"/>
        <end position="653"/>
    </location>
</feature>
<feature type="active site" evidence="3">
    <location>
        <position position="430"/>
    </location>
</feature>
<feature type="binding site" evidence="3">
    <location>
        <position position="429"/>
    </location>
    <ligand>
        <name>Zn(2+)</name>
        <dbReference type="ChEBI" id="CHEBI:29105"/>
        <note>catalytic</note>
    </ligand>
</feature>
<feature type="binding site" evidence="3">
    <location>
        <position position="433"/>
    </location>
    <ligand>
        <name>Zn(2+)</name>
        <dbReference type="ChEBI" id="CHEBI:29105"/>
        <note>catalytic</note>
    </ligand>
</feature>
<feature type="glycosylation site" description="N-linked (GlcNAc...) asparagine" evidence="2">
    <location>
        <position position="327"/>
    </location>
</feature>
<feature type="glycosylation site" description="N-linked (GlcNAc...) asparagine" evidence="2">
    <location>
        <position position="336"/>
    </location>
</feature>
<feature type="glycosylation site" description="N-linked (GlcNAc...) asparagine" evidence="2">
    <location>
        <position position="412"/>
    </location>
</feature>
<feature type="glycosylation site" description="N-linked (GlcNAc...) asparagine" evidence="2">
    <location>
        <position position="636"/>
    </location>
</feature>
<feature type="glycosylation site" description="N-linked (GlcNAc...) asparagine" evidence="2">
    <location>
        <position position="637"/>
    </location>
</feature>
<accession>B2WKX9</accession>
<reference key="1">
    <citation type="journal article" date="2013" name="G3 (Bethesda)">
        <title>Comparative genomics of a plant-pathogenic fungus, Pyrenophora tritici-repentis, reveals transduplication and the impact of repeat elements on pathogenicity and population divergence.</title>
        <authorList>
            <person name="Manning V.A."/>
            <person name="Pandelova I."/>
            <person name="Dhillon B."/>
            <person name="Wilhelm L.J."/>
            <person name="Goodwin S.B."/>
            <person name="Berlin A.M."/>
            <person name="Figueroa M."/>
            <person name="Freitag M."/>
            <person name="Hane J.K."/>
            <person name="Henrissat B."/>
            <person name="Holman W.H."/>
            <person name="Kodira C.D."/>
            <person name="Martin J."/>
            <person name="Oliver R.P."/>
            <person name="Robbertse B."/>
            <person name="Schackwitz W."/>
            <person name="Schwartz D.C."/>
            <person name="Spatafora J.W."/>
            <person name="Turgeon B.G."/>
            <person name="Yandava C."/>
            <person name="Young S."/>
            <person name="Zhou S."/>
            <person name="Zeng Q."/>
            <person name="Grigoriev I.V."/>
            <person name="Ma L.-J."/>
            <person name="Ciuffetti L.M."/>
        </authorList>
    </citation>
    <scope>NUCLEOTIDE SEQUENCE [LARGE SCALE GENOMIC DNA]</scope>
    <source>
        <strain>Pt-1C-BFP</strain>
    </source>
</reference>
<comment type="function">
    <text evidence="1">Secreted metalloproteinase that allows assimilation of proteinaceous substrates.</text>
</comment>
<comment type="cofactor">
    <cofactor evidence="1">
        <name>Zn(2+)</name>
        <dbReference type="ChEBI" id="CHEBI:29105"/>
    </cofactor>
    <text evidence="1">Binds 1 zinc ion per subunit.</text>
</comment>
<comment type="subcellular location">
    <subcellularLocation>
        <location evidence="1">Secreted</location>
    </subcellularLocation>
</comment>
<comment type="induction">
    <text>Expression is controlled by the prtT transcription factor.</text>
</comment>
<comment type="similarity">
    <text evidence="4">Belongs to the peptidase M36 family.</text>
</comment>
<gene>
    <name type="primary">MEP</name>
    <name type="ORF">PTRG_10639</name>
</gene>
<proteinExistence type="evidence at transcript level"/>